<feature type="chain" id="PRO_0000280005" description="Glutathione transport system permease protein GsiD">
    <location>
        <begin position="1"/>
        <end position="303"/>
    </location>
</feature>
<feature type="transmembrane region" description="Helical" evidence="3">
    <location>
        <begin position="40"/>
        <end position="60"/>
    </location>
</feature>
<feature type="transmembrane region" description="Helical" evidence="3">
    <location>
        <begin position="105"/>
        <end position="125"/>
    </location>
</feature>
<feature type="transmembrane region" description="Helical" evidence="3">
    <location>
        <begin position="144"/>
        <end position="164"/>
    </location>
</feature>
<feature type="transmembrane region" description="Helical" evidence="3">
    <location>
        <begin position="165"/>
        <end position="185"/>
    </location>
</feature>
<feature type="transmembrane region" description="Helical" evidence="3">
    <location>
        <begin position="222"/>
        <end position="242"/>
    </location>
</feature>
<feature type="transmembrane region" description="Helical" evidence="3">
    <location>
        <begin position="266"/>
        <end position="286"/>
    </location>
</feature>
<feature type="domain" description="ABC transmembrane type-1" evidence="3">
    <location>
        <begin position="101"/>
        <end position="290"/>
    </location>
</feature>
<proteinExistence type="inferred from homology"/>
<reference key="1">
    <citation type="journal article" date="2002" name="Proc. Natl. Acad. Sci. U.S.A.">
        <title>Extensive mosaic structure revealed by the complete genome sequence of uropathogenic Escherichia coli.</title>
        <authorList>
            <person name="Welch R.A."/>
            <person name="Burland V."/>
            <person name="Plunkett G. III"/>
            <person name="Redford P."/>
            <person name="Roesch P."/>
            <person name="Rasko D."/>
            <person name="Buckles E.L."/>
            <person name="Liou S.-R."/>
            <person name="Boutin A."/>
            <person name="Hackett J."/>
            <person name="Stroud D."/>
            <person name="Mayhew G.F."/>
            <person name="Rose D.J."/>
            <person name="Zhou S."/>
            <person name="Schwartz D.C."/>
            <person name="Perna N.T."/>
            <person name="Mobley H.L.T."/>
            <person name="Donnenberg M.S."/>
            <person name="Blattner F.R."/>
        </authorList>
    </citation>
    <scope>NUCLEOTIDE SEQUENCE [LARGE SCALE GENOMIC DNA]</scope>
    <source>
        <strain>CFT073 / ATCC 700928 / UPEC</strain>
    </source>
</reference>
<organism>
    <name type="scientific">Escherichia coli O6:H1 (strain CFT073 / ATCC 700928 / UPEC)</name>
    <dbReference type="NCBI Taxonomy" id="199310"/>
    <lineage>
        <taxon>Bacteria</taxon>
        <taxon>Pseudomonadati</taxon>
        <taxon>Pseudomonadota</taxon>
        <taxon>Gammaproteobacteria</taxon>
        <taxon>Enterobacterales</taxon>
        <taxon>Enterobacteriaceae</taxon>
        <taxon>Escherichia</taxon>
    </lineage>
</organism>
<comment type="function">
    <text evidence="1">Part of the ABC transporter complex GsiABCD involved in glutathione import. Probably responsible for the translocation of the substrate across the membrane.</text>
</comment>
<comment type="subunit">
    <text evidence="1">The complex is composed of two ATP-binding proteins (GsiA), two transmembrane proteins (GsiC and GsiD) and a solute-binding protein (GsiB).</text>
</comment>
<comment type="subcellular location">
    <subcellularLocation>
        <location evidence="1">Cell inner membrane</location>
        <topology evidence="2">Multi-pass membrane protein</topology>
    </subcellularLocation>
</comment>
<comment type="similarity">
    <text evidence="4">Belongs to the binding-protein-dependent transport system permease family.</text>
</comment>
<protein>
    <recommendedName>
        <fullName evidence="1">Glutathione transport system permease protein GsiD</fullName>
    </recommendedName>
</protein>
<evidence type="ECO:0000250" key="1">
    <source>
        <dbReference type="UniProtKB" id="P75799"/>
    </source>
</evidence>
<evidence type="ECO:0000255" key="2"/>
<evidence type="ECO:0000255" key="3">
    <source>
        <dbReference type="PROSITE-ProRule" id="PRU00441"/>
    </source>
</evidence>
<evidence type="ECO:0000305" key="4"/>
<keyword id="KW-0997">Cell inner membrane</keyword>
<keyword id="KW-1003">Cell membrane</keyword>
<keyword id="KW-0472">Membrane</keyword>
<keyword id="KW-1185">Reference proteome</keyword>
<keyword id="KW-0812">Transmembrane</keyword>
<keyword id="KW-1133">Transmembrane helix</keyword>
<keyword id="KW-0813">Transport</keyword>
<accession>Q8FJK8</accession>
<dbReference type="EMBL" id="AE014075">
    <property type="protein sequence ID" value="AAN79390.1"/>
    <property type="molecule type" value="Genomic_DNA"/>
</dbReference>
<dbReference type="RefSeq" id="WP_001236019.1">
    <property type="nucleotide sequence ID" value="NZ_CP051263.1"/>
</dbReference>
<dbReference type="SMR" id="Q8FJK8"/>
<dbReference type="STRING" id="199310.c0917"/>
<dbReference type="KEGG" id="ecc:c0917"/>
<dbReference type="eggNOG" id="COG1173">
    <property type="taxonomic scope" value="Bacteria"/>
</dbReference>
<dbReference type="HOGENOM" id="CLU_028518_1_1_6"/>
<dbReference type="BioCyc" id="ECOL199310:C0917-MONOMER"/>
<dbReference type="Proteomes" id="UP000001410">
    <property type="component" value="Chromosome"/>
</dbReference>
<dbReference type="GO" id="GO:0005886">
    <property type="term" value="C:plasma membrane"/>
    <property type="evidence" value="ECO:0007669"/>
    <property type="project" value="UniProtKB-SubCell"/>
</dbReference>
<dbReference type="GO" id="GO:0071916">
    <property type="term" value="F:dipeptide transmembrane transporter activity"/>
    <property type="evidence" value="ECO:0007669"/>
    <property type="project" value="TreeGrafter"/>
</dbReference>
<dbReference type="CDD" id="cd06261">
    <property type="entry name" value="TM_PBP2"/>
    <property type="match status" value="1"/>
</dbReference>
<dbReference type="FunFam" id="1.10.3720.10:FF:000022">
    <property type="entry name" value="Glutathione ABC transporter permease GsiD"/>
    <property type="match status" value="1"/>
</dbReference>
<dbReference type="Gene3D" id="1.10.3720.10">
    <property type="entry name" value="MetI-like"/>
    <property type="match status" value="1"/>
</dbReference>
<dbReference type="InterPro" id="IPR050366">
    <property type="entry name" value="BP-dependent_transpt_permease"/>
</dbReference>
<dbReference type="InterPro" id="IPR000515">
    <property type="entry name" value="MetI-like"/>
</dbReference>
<dbReference type="InterPro" id="IPR035906">
    <property type="entry name" value="MetI-like_sf"/>
</dbReference>
<dbReference type="InterPro" id="IPR025966">
    <property type="entry name" value="OppC_N"/>
</dbReference>
<dbReference type="NCBIfam" id="NF011662">
    <property type="entry name" value="PRK15082.1"/>
    <property type="match status" value="1"/>
</dbReference>
<dbReference type="PANTHER" id="PTHR43386:SF3">
    <property type="entry name" value="GLUTATHIONE TRANSPORT SYSTEM PERMEASE PROTEIN GSID"/>
    <property type="match status" value="1"/>
</dbReference>
<dbReference type="PANTHER" id="PTHR43386">
    <property type="entry name" value="OLIGOPEPTIDE TRANSPORT SYSTEM PERMEASE PROTEIN APPC"/>
    <property type="match status" value="1"/>
</dbReference>
<dbReference type="Pfam" id="PF00528">
    <property type="entry name" value="BPD_transp_1"/>
    <property type="match status" value="1"/>
</dbReference>
<dbReference type="Pfam" id="PF12911">
    <property type="entry name" value="OppC_N"/>
    <property type="match status" value="1"/>
</dbReference>
<dbReference type="SUPFAM" id="SSF161098">
    <property type="entry name" value="MetI-like"/>
    <property type="match status" value="1"/>
</dbReference>
<dbReference type="PROSITE" id="PS50928">
    <property type="entry name" value="ABC_TM1"/>
    <property type="match status" value="1"/>
</dbReference>
<name>GSID_ECOL6</name>
<sequence length="303" mass="33224">MRLFNWRRQAALNAMPLVKPDQVRTPWHEFWRRFRRQHMAMTAALFVILLIVVAIFARWIAPYDAENYFDYDNLNNGPSLQHWFGVDSLGRDIFSRVLVGAQISLAAGVFAVFIGAAIGTLLGLLAGYYEGWWDRLIMRICDVLFAFPGILLAIAVVAVLGSGIANVIIAVAIFSIPAFARLVRGNTLVLKQQTFIESARSIGASDMTILLRHILPGTVSSIVVFFTMRIGTSIISAASLSFLGLGAQPPTPEWGAMLNEARADMVIAPHVAVFPALAIFLTVLAFNLLGDGLRDALDPKIKG</sequence>
<gene>
    <name evidence="1" type="primary">gsiD</name>
    <name type="ordered locus">c0917</name>
</gene>